<comment type="function">
    <text evidence="1">This protein binds to a specific region on the 26S rRNA.</text>
</comment>
<comment type="similarity">
    <text evidence="3">Belongs to the universal ribosomal protein uL23 family.</text>
</comment>
<keyword id="KW-0687">Ribonucleoprotein</keyword>
<keyword id="KW-0689">Ribosomal protein</keyword>
<keyword id="KW-0694">RNA-binding</keyword>
<keyword id="KW-0699">rRNA-binding</keyword>
<accession>P51997</accession>
<accession>O00054</accession>
<evidence type="ECO:0000250" key="1"/>
<evidence type="ECO:0000256" key="2">
    <source>
        <dbReference type="SAM" id="MobiDB-lite"/>
    </source>
</evidence>
<evidence type="ECO:0000305" key="3"/>
<dbReference type="EMBL" id="U44800">
    <property type="protein sequence ID" value="AAB41938.1"/>
    <property type="molecule type" value="mRNA"/>
</dbReference>
<dbReference type="SMR" id="P51997"/>
<dbReference type="VEuPathDB" id="FungiDB:PGTG_00058"/>
<dbReference type="OMA" id="RLDHHKV"/>
<dbReference type="GO" id="GO:1990904">
    <property type="term" value="C:ribonucleoprotein complex"/>
    <property type="evidence" value="ECO:0007669"/>
    <property type="project" value="UniProtKB-KW"/>
</dbReference>
<dbReference type="GO" id="GO:0005840">
    <property type="term" value="C:ribosome"/>
    <property type="evidence" value="ECO:0007669"/>
    <property type="project" value="UniProtKB-KW"/>
</dbReference>
<dbReference type="GO" id="GO:0019843">
    <property type="term" value="F:rRNA binding"/>
    <property type="evidence" value="ECO:0007669"/>
    <property type="project" value="UniProtKB-KW"/>
</dbReference>
<dbReference type="GO" id="GO:0003735">
    <property type="term" value="F:structural constituent of ribosome"/>
    <property type="evidence" value="ECO:0007669"/>
    <property type="project" value="InterPro"/>
</dbReference>
<dbReference type="GO" id="GO:0006412">
    <property type="term" value="P:translation"/>
    <property type="evidence" value="ECO:0007669"/>
    <property type="project" value="InterPro"/>
</dbReference>
<dbReference type="FunFam" id="3.30.70.330:FF:000035">
    <property type="entry name" value="60S ribosomal protein L23a"/>
    <property type="match status" value="1"/>
</dbReference>
<dbReference type="Gene3D" id="3.30.70.330">
    <property type="match status" value="1"/>
</dbReference>
<dbReference type="HAMAP" id="MF_01369_A">
    <property type="entry name" value="Ribosomal_uL23_A"/>
    <property type="match status" value="1"/>
</dbReference>
<dbReference type="InterPro" id="IPR012677">
    <property type="entry name" value="Nucleotide-bd_a/b_plait_sf"/>
</dbReference>
<dbReference type="InterPro" id="IPR013025">
    <property type="entry name" value="Ribosomal_uL23-like"/>
</dbReference>
<dbReference type="InterPro" id="IPR012678">
    <property type="entry name" value="Ribosomal_uL23/eL15/eS24_sf"/>
</dbReference>
<dbReference type="InterPro" id="IPR001014">
    <property type="entry name" value="Ribosomal_uL23_CS"/>
</dbReference>
<dbReference type="InterPro" id="IPR005633">
    <property type="entry name" value="Ribosomal_uL23_N"/>
</dbReference>
<dbReference type="NCBIfam" id="NF011118">
    <property type="entry name" value="PRK14548.1"/>
    <property type="match status" value="1"/>
</dbReference>
<dbReference type="PANTHER" id="PTHR11620">
    <property type="entry name" value="60S RIBOSOMAL PROTEIN L23A"/>
    <property type="match status" value="1"/>
</dbReference>
<dbReference type="Pfam" id="PF00276">
    <property type="entry name" value="Ribosomal_L23"/>
    <property type="match status" value="1"/>
</dbReference>
<dbReference type="Pfam" id="PF03939">
    <property type="entry name" value="Ribosomal_L23eN"/>
    <property type="match status" value="1"/>
</dbReference>
<dbReference type="SUPFAM" id="SSF54189">
    <property type="entry name" value="Ribosomal proteins S24e, L23 and L15e"/>
    <property type="match status" value="1"/>
</dbReference>
<dbReference type="PROSITE" id="PS00050">
    <property type="entry name" value="RIBOSOMAL_L23"/>
    <property type="match status" value="1"/>
</dbReference>
<protein>
    <recommendedName>
        <fullName evidence="3">Large ribosomal subunit protein uL23</fullName>
    </recommendedName>
    <alternativeName>
        <fullName>60S ribosomal protein L25</fullName>
    </alternativeName>
</protein>
<feature type="chain" id="PRO_0000129480" description="Large ribosomal subunit protein uL23">
    <location>
        <begin position="1"/>
        <end position="158"/>
    </location>
</feature>
<feature type="region of interest" description="Disordered" evidence="2">
    <location>
        <begin position="1"/>
        <end position="43"/>
    </location>
</feature>
<feature type="compositionally biased region" description="Low complexity" evidence="2">
    <location>
        <begin position="12"/>
        <end position="23"/>
    </location>
</feature>
<proteinExistence type="evidence at transcript level"/>
<sequence>MPPKSSTKAEPKASSAKTQVAKAKSAKKAVVKGTSSKTQRRIRTSVTFRRPKTLRLSRKPKYPRTSVPHAPRMDAYRTLVRPLNTESAMKKIEDNNTLLFIVDLKANKRQIADAVKKLYDVTPLRVNTLIRPDGKKKAFVRLTPEVDALDIANKIGFI</sequence>
<reference key="1">
    <citation type="submission" date="1996-01" db="EMBL/GenBank/DDBJ databases">
        <authorList>
            <person name="Lin K.-C."/>
            <person name="Bushnell W.R."/>
        </authorList>
    </citation>
    <scope>NUCLEOTIDE SEQUENCE [MRNA]</scope>
    <source>
        <strain>Sp. avenae 6A</strain>
    </source>
</reference>
<organism>
    <name type="scientific">Puccinia graminis</name>
    <name type="common">Black stem rust fungus</name>
    <dbReference type="NCBI Taxonomy" id="5297"/>
    <lineage>
        <taxon>Eukaryota</taxon>
        <taxon>Fungi</taxon>
        <taxon>Dikarya</taxon>
        <taxon>Basidiomycota</taxon>
        <taxon>Pucciniomycotina</taxon>
        <taxon>Pucciniomycetes</taxon>
        <taxon>Pucciniales</taxon>
        <taxon>Pucciniaceae</taxon>
        <taxon>Puccinia</taxon>
    </lineage>
</organism>
<name>RL25_PUCGR</name>